<gene>
    <name type="primary">pxl-1</name>
    <name type="synonym">tag-327</name>
    <name type="ORF">C28H8.6</name>
</gene>
<keyword id="KW-0025">Alternative splicing</keyword>
<keyword id="KW-0965">Cell junction</keyword>
<keyword id="KW-1003">Cell membrane</keyword>
<keyword id="KW-0966">Cell projection</keyword>
<keyword id="KW-0963">Cytoplasm</keyword>
<keyword id="KW-0440">LIM domain</keyword>
<keyword id="KW-0472">Membrane</keyword>
<keyword id="KW-0479">Metal-binding</keyword>
<keyword id="KW-1185">Reference proteome</keyword>
<keyword id="KW-0677">Repeat</keyword>
<keyword id="KW-0862">Zinc</keyword>
<feature type="chain" id="PRO_0000355614" description="Paxillin homolog 1">
    <location>
        <begin position="1"/>
        <end position="413"/>
    </location>
</feature>
<feature type="domain" description="LIM zinc-binding 1" evidence="1">
    <location>
        <begin position="174"/>
        <end position="232"/>
    </location>
</feature>
<feature type="domain" description="LIM zinc-binding 2" evidence="1">
    <location>
        <begin position="233"/>
        <end position="292"/>
    </location>
</feature>
<feature type="domain" description="LIM zinc-binding 3" evidence="1">
    <location>
        <begin position="293"/>
        <end position="350"/>
    </location>
</feature>
<feature type="domain" description="LIM zinc-binding 4" evidence="1">
    <location>
        <begin position="351"/>
        <end position="410"/>
    </location>
</feature>
<feature type="region of interest" description="Disordered" evidence="2">
    <location>
        <begin position="33"/>
        <end position="157"/>
    </location>
</feature>
<feature type="compositionally biased region" description="Basic and acidic residues" evidence="2">
    <location>
        <begin position="33"/>
        <end position="45"/>
    </location>
</feature>
<feature type="compositionally biased region" description="Polar residues" evidence="2">
    <location>
        <begin position="49"/>
        <end position="69"/>
    </location>
</feature>
<feature type="compositionally biased region" description="Basic and acidic residues" evidence="2">
    <location>
        <begin position="73"/>
        <end position="92"/>
    </location>
</feature>
<feature type="compositionally biased region" description="Polar residues" evidence="2">
    <location>
        <begin position="118"/>
        <end position="143"/>
    </location>
</feature>
<feature type="splice variant" id="VSP_035943" description="In isoform b." evidence="4">
    <location>
        <begin position="1"/>
        <end position="87"/>
    </location>
</feature>
<feature type="splice variant" id="VSP_035944" description="In isoform c." evidence="4">
    <location>
        <begin position="59"/>
        <end position="119"/>
    </location>
</feature>
<feature type="splice variant" id="VSP_020533" description="In isoform b." evidence="4">
    <original>YENESRLNPPVYSRPSVQSLLSQVEEPPIRAS</original>
    <variation>MMRELQQRLDHFNGPNYAQNSHSNHQQHHSVY</variation>
    <location>
        <begin position="88"/>
        <end position="119"/>
    </location>
</feature>
<feature type="splice variant" id="VSP_020534" description="In isoform b." evidence="4">
    <original>HCGVSFNGASFFEHNGAPLCER</original>
    <variation>GNTHFAQQCPMDVTYFEEENAY</variation>
    <location>
        <begin position="322"/>
        <end position="343"/>
    </location>
</feature>
<feature type="splice variant" id="VSP_020535" description="In isoform b." evidence="4">
    <location>
        <begin position="344"/>
        <end position="413"/>
    </location>
</feature>
<accession>Q09476</accession>
<accession>A7YEM2</accession>
<accession>A7YEP3</accession>
<accession>A8WEL3</accession>
<accession>Q6AHR2</accession>
<organism>
    <name type="scientific">Caenorhabditis elegans</name>
    <dbReference type="NCBI Taxonomy" id="6239"/>
    <lineage>
        <taxon>Eukaryota</taxon>
        <taxon>Metazoa</taxon>
        <taxon>Ecdysozoa</taxon>
        <taxon>Nematoda</taxon>
        <taxon>Chromadorea</taxon>
        <taxon>Rhabditida</taxon>
        <taxon>Rhabditina</taxon>
        <taxon>Rhabditomorpha</taxon>
        <taxon>Rhabditoidea</taxon>
        <taxon>Rhabditidae</taxon>
        <taxon>Peloderinae</taxon>
        <taxon>Caenorhabditis</taxon>
    </lineage>
</organism>
<reference key="1">
    <citation type="journal article" date="2011" name="Mol. Biol. Cell">
        <title>The Caenorhabditis elegans paxillin orthologue, PXL-1, is required for pharyngeal muscle contraction and for viability.</title>
        <authorList>
            <person name="Warner A."/>
            <person name="Qadota H."/>
            <person name="Benian G.M."/>
            <person name="Vogl A.W."/>
            <person name="Moerman D.G."/>
        </authorList>
    </citation>
    <scope>NUCLEOTIDE SEQUENCE [MRNA] (ISOFORMS A; B AND C)</scope>
    <scope>FUNCTION</scope>
    <scope>SUBCELLULAR LOCATION</scope>
    <scope>TISSUE SPECIFICITY</scope>
    <scope>DEVELOPMENTAL STAGE</scope>
    <scope>DOMAIN</scope>
    <scope>DISRUPTION PHENOTYPE</scope>
</reference>
<reference key="2">
    <citation type="journal article" date="1998" name="Science">
        <title>Genome sequence of the nematode C. elegans: a platform for investigating biology.</title>
        <authorList>
            <consortium name="The C. elegans sequencing consortium"/>
        </authorList>
    </citation>
    <scope>NUCLEOTIDE SEQUENCE [LARGE SCALE GENOMIC DNA]</scope>
    <scope>ALTERNATIVE SPLICING</scope>
    <source>
        <strain>Bristol N2</strain>
    </source>
</reference>
<name>PXL1_CAEEL</name>
<proteinExistence type="evidence at protein level"/>
<comment type="function">
    <text evidence="3">Required for myofilament organization of the pharyngeal sarcomeres and for pharyngeal muscle contractions and hence for pharyngeal pumping (PubMed:21633109). Together with lin-8, might be required for myofilament organization in the body wall muscles (PubMed:21633109).</text>
</comment>
<comment type="subcellular location">
    <molecule>Isoform a</molecule>
    <subcellularLocation>
        <location evidence="3">Cell junction</location>
        <location evidence="3">Adherens junction</location>
    </subcellularLocation>
    <subcellularLocation>
        <location evidence="3">Cell membrane</location>
    </subcellularLocation>
    <subcellularLocation>
        <location evidence="3">Cytoplasm</location>
        <location evidence="3">Myofibril</location>
        <location evidence="3">Sarcomere</location>
        <location evidence="3">M line</location>
    </subcellularLocation>
    <subcellularLocation>
        <location evidence="3">Cell projection</location>
        <location evidence="3">Podosome</location>
    </subcellularLocation>
    <text evidence="3">Colocalizes with pat-3 to dense bodies, adhesion plaques and M lines in body wall muscles. Colocalizes with deb-1 in podosome-like structures in the pharyngeal muscle. Requires unc-95 for the localization to dense bodies.</text>
</comment>
<comment type="subcellular location">
    <molecule>Isoform c</molecule>
    <subcellularLocation>
        <location evidence="3">Cell projection</location>
        <location evidence="3">Podosome</location>
    </subcellularLocation>
</comment>
<comment type="alternative products">
    <event type="alternative splicing"/>
    <isoform>
        <id>Q09476-1</id>
        <name>a</name>
        <sequence type="displayed"/>
    </isoform>
    <isoform>
        <id>Q09476-2</id>
        <name>b</name>
        <sequence type="described" ref="VSP_035943 VSP_020533 VSP_020534 VSP_020535"/>
    </isoform>
    <isoform>
        <id>Q09476-3</id>
        <name>c</name>
        <sequence type="described" ref="VSP_035944"/>
    </isoform>
</comment>
<comment type="tissue specificity">
    <text evidence="3">Isoform a: Expressed in all 95 body wall muscle cells as well as in the pharyngeal muscle cells (at protein level). Isoform c: Expressed in the body wall muscle cells and in the pharyngeal muscle cells.</text>
</comment>
<comment type="developmental stage">
    <text evidence="3">Expressed in adult animals.</text>
</comment>
<comment type="domain">
    <text evidence="3">LIM zinc-binding domains 1-4 are sufficient for the localization to dense bodies, adhesion plaques and M lines in body wall muscles.</text>
</comment>
<comment type="disruption phenotype">
    <text evidence="3">RNAi-mediated knockdown leads to developmental arrest at larval stage L1.</text>
</comment>
<comment type="similarity">
    <text evidence="5">Belongs to the paxillin family.</text>
</comment>
<sequence>MPSDDRFADAVKPALEALLSDLQHTTEVLRRAHISDRRSQSRDDFEQSYDLQGNLNTQSVSNGNITTSPYKRRSSEGKDYSKSQERIYENESRLNPPVYSRPSVQSLLSQVEEPPIRASSSRKSLGPPSQAQSYSDVRSNGRSPSRDPLHSDSMIGTMNGELSSKHGVNTIPKGDCAACGKPIIGQVVIALGKMWHPEHYTCCECGAELGQRPFFERNGRAFCEEDYHNQFSPKCQGCHRAITDRCVSVMNKNFHIECFTCAECNQPFGEDGFHEKNGQTYCKRDFFRLFAPKCNGCSQPITSNFITALGTHWHPDCFVCQHCGVSFNGASFFEHNGAPLCERHYHESRGSICSQCRGAINGRCVAAMGRKFHPEHFRCSYCNHQLTKGTFKEVDRRPFCHKCYNNTYALTPA</sequence>
<dbReference type="EMBL" id="EU239658">
    <property type="protein sequence ID" value="ABW99674.1"/>
    <property type="molecule type" value="mRNA"/>
</dbReference>
<dbReference type="EMBL" id="EU239659">
    <property type="protein sequence ID" value="ABW99675.1"/>
    <property type="molecule type" value="mRNA"/>
</dbReference>
<dbReference type="EMBL" id="EU239660">
    <property type="protein sequence ID" value="ABW99676.1"/>
    <property type="molecule type" value="mRNA"/>
</dbReference>
<dbReference type="EMBL" id="FO080703">
    <property type="protein sequence ID" value="CCD65967.1"/>
    <property type="molecule type" value="Genomic_DNA"/>
</dbReference>
<dbReference type="EMBL" id="FO080703">
    <property type="protein sequence ID" value="CCD65977.1"/>
    <property type="molecule type" value="Genomic_DNA"/>
</dbReference>
<dbReference type="EMBL" id="FO080703">
    <property type="protein sequence ID" value="CCD65976.1"/>
    <property type="molecule type" value="Genomic_DNA"/>
</dbReference>
<dbReference type="PIR" id="E88469">
    <property type="entry name" value="E88469"/>
</dbReference>
<dbReference type="RefSeq" id="NP_001021185.2">
    <molecule id="Q09476-1"/>
    <property type="nucleotide sequence ID" value="NM_001026014.5"/>
</dbReference>
<dbReference type="RefSeq" id="NP_001021186.1">
    <molecule id="Q09476-2"/>
    <property type="nucleotide sequence ID" value="NM_001026015.3"/>
</dbReference>
<dbReference type="RefSeq" id="NP_001122677.1">
    <molecule id="Q09476-3"/>
    <property type="nucleotide sequence ID" value="NM_001129205.4"/>
</dbReference>
<dbReference type="SMR" id="Q09476"/>
<dbReference type="BioGRID" id="41053">
    <property type="interactions" value="13"/>
</dbReference>
<dbReference type="DIP" id="DIP-27019N"/>
<dbReference type="FunCoup" id="Q09476">
    <property type="interactions" value="211"/>
</dbReference>
<dbReference type="STRING" id="6239.C28H8.6a.1"/>
<dbReference type="PaxDb" id="6239-C28H8.6a"/>
<dbReference type="PeptideAtlas" id="Q09476"/>
<dbReference type="EnsemblMetazoa" id="C28H8.6a.1">
    <molecule id="Q09476-1"/>
    <property type="protein sequence ID" value="C28H8.6a.1"/>
    <property type="gene ID" value="WBGene00016197"/>
</dbReference>
<dbReference type="EnsemblMetazoa" id="C28H8.6b.1">
    <molecule id="Q09476-2"/>
    <property type="protein sequence ID" value="C28H8.6b.1"/>
    <property type="gene ID" value="WBGene00016197"/>
</dbReference>
<dbReference type="EnsemblMetazoa" id="C28H8.6c.1">
    <molecule id="Q09476-3"/>
    <property type="protein sequence ID" value="C28H8.6c.1"/>
    <property type="gene ID" value="WBGene00016197"/>
</dbReference>
<dbReference type="GeneID" id="175831"/>
<dbReference type="KEGG" id="cel:CELE_C28H8.6"/>
<dbReference type="UCSC" id="C28H8.6b">
    <property type="organism name" value="c. elegans"/>
</dbReference>
<dbReference type="AGR" id="WB:WBGene00016197"/>
<dbReference type="CTD" id="175831"/>
<dbReference type="WormBase" id="C28H8.6a">
    <molecule id="Q09476-1"/>
    <property type="protein sequence ID" value="CE41530"/>
    <property type="gene ID" value="WBGene00016197"/>
    <property type="gene designation" value="pxl-1"/>
</dbReference>
<dbReference type="WormBase" id="C28H8.6b">
    <molecule id="Q09476-2"/>
    <property type="protein sequence ID" value="CE37096"/>
    <property type="gene ID" value="WBGene00016197"/>
    <property type="gene designation" value="pxl-1"/>
</dbReference>
<dbReference type="WormBase" id="C28H8.6c">
    <molecule id="Q09476-3"/>
    <property type="protein sequence ID" value="CE41531"/>
    <property type="gene ID" value="WBGene00016197"/>
    <property type="gene designation" value="pxl-1"/>
</dbReference>
<dbReference type="eggNOG" id="KOG1703">
    <property type="taxonomic scope" value="Eukaryota"/>
</dbReference>
<dbReference type="GeneTree" id="ENSGT00940000172970"/>
<dbReference type="InParanoid" id="Q09476"/>
<dbReference type="OMA" id="MPLCETH"/>
<dbReference type="OrthoDB" id="15567at2759"/>
<dbReference type="PhylomeDB" id="Q09476"/>
<dbReference type="PRO" id="PR:Q09476"/>
<dbReference type="Proteomes" id="UP000001940">
    <property type="component" value="Chromosome III"/>
</dbReference>
<dbReference type="Bgee" id="WBGene00016197">
    <property type="expression patterns" value="Expressed in larva and 3 other cell types or tissues"/>
</dbReference>
<dbReference type="GO" id="GO:0005912">
    <property type="term" value="C:adherens junction"/>
    <property type="evidence" value="ECO:0000314"/>
    <property type="project" value="WormBase"/>
</dbReference>
<dbReference type="GO" id="GO:0042995">
    <property type="term" value="C:cell projection"/>
    <property type="evidence" value="ECO:0007669"/>
    <property type="project" value="UniProtKB-KW"/>
</dbReference>
<dbReference type="GO" id="GO:0031430">
    <property type="term" value="C:M band"/>
    <property type="evidence" value="ECO:0000314"/>
    <property type="project" value="WormBase"/>
</dbReference>
<dbReference type="GO" id="GO:0005886">
    <property type="term" value="C:plasma membrane"/>
    <property type="evidence" value="ECO:0007669"/>
    <property type="project" value="UniProtKB-SubCell"/>
</dbReference>
<dbReference type="GO" id="GO:0002102">
    <property type="term" value="C:podosome"/>
    <property type="evidence" value="ECO:0000314"/>
    <property type="project" value="WormBase"/>
</dbReference>
<dbReference type="GO" id="GO:0055120">
    <property type="term" value="C:striated muscle dense body"/>
    <property type="evidence" value="ECO:0000314"/>
    <property type="project" value="WormBase"/>
</dbReference>
<dbReference type="GO" id="GO:0046872">
    <property type="term" value="F:metal ion binding"/>
    <property type="evidence" value="ECO:0007669"/>
    <property type="project" value="UniProtKB-KW"/>
</dbReference>
<dbReference type="GO" id="GO:0017166">
    <property type="term" value="F:vinculin binding"/>
    <property type="evidence" value="ECO:0000353"/>
    <property type="project" value="WormBase"/>
</dbReference>
<dbReference type="GO" id="GO:0061061">
    <property type="term" value="P:muscle structure development"/>
    <property type="evidence" value="ECO:0000315"/>
    <property type="project" value="WormBase"/>
</dbReference>
<dbReference type="GO" id="GO:0002119">
    <property type="term" value="P:nematode larval development"/>
    <property type="evidence" value="ECO:0000315"/>
    <property type="project" value="WormBase"/>
</dbReference>
<dbReference type="GO" id="GO:0043050">
    <property type="term" value="P:nematode pharyngeal pumping"/>
    <property type="evidence" value="ECO:0000315"/>
    <property type="project" value="WormBase"/>
</dbReference>
<dbReference type="CDD" id="cd09406">
    <property type="entry name" value="LIM1_Leupaxin"/>
    <property type="match status" value="1"/>
</dbReference>
<dbReference type="CDD" id="cd09338">
    <property type="entry name" value="LIM3_Paxillin_like"/>
    <property type="match status" value="1"/>
</dbReference>
<dbReference type="CDD" id="cd09339">
    <property type="entry name" value="LIM4_Paxillin_like"/>
    <property type="match status" value="1"/>
</dbReference>
<dbReference type="FunFam" id="2.10.110.10:FF:000008">
    <property type="entry name" value="Paxillin isoform 1"/>
    <property type="match status" value="1"/>
</dbReference>
<dbReference type="FunFam" id="2.10.110.10:FF:000009">
    <property type="entry name" value="Paxillin isoform 1"/>
    <property type="match status" value="2"/>
</dbReference>
<dbReference type="FunFam" id="2.10.110.10:FF:000018">
    <property type="entry name" value="Paxillin isoform 1"/>
    <property type="match status" value="1"/>
</dbReference>
<dbReference type="Gene3D" id="2.10.110.10">
    <property type="entry name" value="Cysteine Rich Protein"/>
    <property type="match status" value="4"/>
</dbReference>
<dbReference type="InterPro" id="IPR001781">
    <property type="entry name" value="Znf_LIM"/>
</dbReference>
<dbReference type="PANTHER" id="PTHR24216:SF8">
    <property type="entry name" value="PAXILLIN, ISOFORM F"/>
    <property type="match status" value="1"/>
</dbReference>
<dbReference type="PANTHER" id="PTHR24216">
    <property type="entry name" value="PAXILLIN-RELATED"/>
    <property type="match status" value="1"/>
</dbReference>
<dbReference type="Pfam" id="PF00412">
    <property type="entry name" value="LIM"/>
    <property type="match status" value="4"/>
</dbReference>
<dbReference type="SMART" id="SM00132">
    <property type="entry name" value="LIM"/>
    <property type="match status" value="4"/>
</dbReference>
<dbReference type="SUPFAM" id="SSF57716">
    <property type="entry name" value="Glucocorticoid receptor-like (DNA-binding domain)"/>
    <property type="match status" value="5"/>
</dbReference>
<dbReference type="PROSITE" id="PS00478">
    <property type="entry name" value="LIM_DOMAIN_1"/>
    <property type="match status" value="4"/>
</dbReference>
<dbReference type="PROSITE" id="PS50023">
    <property type="entry name" value="LIM_DOMAIN_2"/>
    <property type="match status" value="4"/>
</dbReference>
<evidence type="ECO:0000255" key="1">
    <source>
        <dbReference type="PROSITE-ProRule" id="PRU00125"/>
    </source>
</evidence>
<evidence type="ECO:0000256" key="2">
    <source>
        <dbReference type="SAM" id="MobiDB-lite"/>
    </source>
</evidence>
<evidence type="ECO:0000269" key="3">
    <source>
    </source>
</evidence>
<evidence type="ECO:0000303" key="4">
    <source>
    </source>
</evidence>
<evidence type="ECO:0000305" key="5"/>
<protein>
    <recommendedName>
        <fullName>Paxillin homolog 1</fullName>
    </recommendedName>
</protein>